<name>PSB6_MOUSE</name>
<evidence type="ECO:0000250" key="1"/>
<evidence type="ECO:0000250" key="2">
    <source>
        <dbReference type="UniProtKB" id="P28072"/>
    </source>
</evidence>
<evidence type="ECO:0000255" key="3">
    <source>
        <dbReference type="PROSITE-ProRule" id="PRU00809"/>
    </source>
</evidence>
<evidence type="ECO:0000269" key="4">
    <source>
    </source>
</evidence>
<evidence type="ECO:0000269" key="5">
    <source>
    </source>
</evidence>
<evidence type="ECO:0000269" key="6">
    <source>
    </source>
</evidence>
<evidence type="ECO:0000269" key="7">
    <source>
    </source>
</evidence>
<evidence type="ECO:0000269" key="8">
    <source>
    </source>
</evidence>
<evidence type="ECO:0000305" key="9"/>
<evidence type="ECO:0007829" key="10">
    <source>
        <dbReference type="PDB" id="3UNB"/>
    </source>
</evidence>
<evidence type="ECO:0007829" key="11">
    <source>
        <dbReference type="PDB" id="3UNE"/>
    </source>
</evidence>
<proteinExistence type="evidence at protein level"/>
<sequence length="238" mass="25379">MAAALAVRRAGSAPAFGPEALTPDWENREVSTGTTIMAVQFNGGVVLGADSRTTTGSYIANRVTDKLTPIHDHIFCCRSGSAADTQAVADAVTYQLGFHSIELNEPPLVHTAASLFKEMCYRYREDLMAGIIIAGWDPQEGGQVYSVPMGGMMVRQSFAIGGSGSSYIYGYVDATYREGMTKDECLQFTANALALAMERDGSSGGVIRLAAIQESGVERQVLLGDQIPKFTIATLPPP</sequence>
<dbReference type="EC" id="3.4.25.1" evidence="2"/>
<dbReference type="EMBL" id="U13393">
    <property type="protein sequence ID" value="AAA75375.1"/>
    <property type="status" value="ALT_INIT"/>
    <property type="molecule type" value="mRNA"/>
</dbReference>
<dbReference type="EMBL" id="U13394">
    <property type="protein sequence ID" value="AAA75376.1"/>
    <property type="status" value="ALT_INIT"/>
    <property type="molecule type" value="Genomic_DNA"/>
</dbReference>
<dbReference type="EMBL" id="AK078437">
    <property type="protein sequence ID" value="BAC37272.1"/>
    <property type="molecule type" value="mRNA"/>
</dbReference>
<dbReference type="EMBL" id="AK132042">
    <property type="protein sequence ID" value="BAE20959.1"/>
    <property type="status" value="ALT_FRAME"/>
    <property type="molecule type" value="mRNA"/>
</dbReference>
<dbReference type="EMBL" id="AK167123">
    <property type="protein sequence ID" value="BAE39271.1"/>
    <property type="molecule type" value="mRNA"/>
</dbReference>
<dbReference type="EMBL" id="AK167227">
    <property type="protein sequence ID" value="BAE39351.1"/>
    <property type="molecule type" value="mRNA"/>
</dbReference>
<dbReference type="EMBL" id="AL592547">
    <property type="status" value="NOT_ANNOTATED_CDS"/>
    <property type="molecule type" value="Genomic_DNA"/>
</dbReference>
<dbReference type="EMBL" id="BC013897">
    <property type="protein sequence ID" value="AAH13897.1"/>
    <property type="status" value="ALT_INIT"/>
    <property type="molecule type" value="mRNA"/>
</dbReference>
<dbReference type="CCDS" id="CCDS48836.1"/>
<dbReference type="RefSeq" id="NP_032972.3">
    <property type="nucleotide sequence ID" value="NM_008946.4"/>
</dbReference>
<dbReference type="PDB" id="3UNB">
    <property type="method" value="X-ray"/>
    <property type="resolution" value="2.90 A"/>
    <property type="chains" value="4/N/b/p=34-238"/>
</dbReference>
<dbReference type="PDB" id="3UNE">
    <property type="method" value="X-ray"/>
    <property type="resolution" value="3.20 A"/>
    <property type="chains" value="4/N/b/p=34-238"/>
</dbReference>
<dbReference type="PDB" id="8YPK">
    <property type="method" value="EM"/>
    <property type="resolution" value="2.70 A"/>
    <property type="chains" value="A/F=35-238"/>
</dbReference>
<dbReference type="PDB" id="8YVP">
    <property type="method" value="EM"/>
    <property type="resolution" value="2.50 A"/>
    <property type="chains" value="A/F=35-238"/>
</dbReference>
<dbReference type="PDBsum" id="3UNB"/>
<dbReference type="PDBsum" id="3UNE"/>
<dbReference type="PDBsum" id="8YPK"/>
<dbReference type="PDBsum" id="8YVP"/>
<dbReference type="EMDB" id="EMD-39482"/>
<dbReference type="EMDB" id="EMD-39612"/>
<dbReference type="SMR" id="Q60692"/>
<dbReference type="BioGRID" id="202423">
    <property type="interactions" value="50"/>
</dbReference>
<dbReference type="CORUM" id="Q60692"/>
<dbReference type="FunCoup" id="Q60692">
    <property type="interactions" value="2938"/>
</dbReference>
<dbReference type="IntAct" id="Q60692">
    <property type="interactions" value="6"/>
</dbReference>
<dbReference type="MINT" id="Q60692"/>
<dbReference type="STRING" id="10090.ENSMUSP00000018430"/>
<dbReference type="ChEMBL" id="CHEMBL1944493"/>
<dbReference type="MEROPS" id="T01.010"/>
<dbReference type="GlyGen" id="Q60692">
    <property type="glycosylation" value="1 site, 1 O-linked glycan (1 site)"/>
</dbReference>
<dbReference type="iPTMnet" id="Q60692"/>
<dbReference type="PhosphoSitePlus" id="Q60692"/>
<dbReference type="SwissPalm" id="Q60692"/>
<dbReference type="REPRODUCTION-2DPAGE" id="Q60692"/>
<dbReference type="jPOST" id="Q60692"/>
<dbReference type="PaxDb" id="10090-ENSMUSP00000018430"/>
<dbReference type="PeptideAtlas" id="Q60692"/>
<dbReference type="ProteomicsDB" id="291538"/>
<dbReference type="Pumba" id="Q60692"/>
<dbReference type="Antibodypedia" id="11325">
    <property type="antibodies" value="151 antibodies from 29 providers"/>
</dbReference>
<dbReference type="DNASU" id="19175"/>
<dbReference type="Ensembl" id="ENSMUST00000018430.7">
    <property type="protein sequence ID" value="ENSMUSP00000018430.7"/>
    <property type="gene ID" value="ENSMUSG00000018286.7"/>
</dbReference>
<dbReference type="GeneID" id="19175"/>
<dbReference type="KEGG" id="mmu:19175"/>
<dbReference type="UCSC" id="uc007jve.2">
    <property type="organism name" value="mouse"/>
</dbReference>
<dbReference type="AGR" id="MGI:104880"/>
<dbReference type="CTD" id="5694"/>
<dbReference type="MGI" id="MGI:104880">
    <property type="gene designation" value="Psmb6"/>
</dbReference>
<dbReference type="VEuPathDB" id="HostDB:ENSMUSG00000018286"/>
<dbReference type="eggNOG" id="KOG0174">
    <property type="taxonomic scope" value="Eukaryota"/>
</dbReference>
<dbReference type="GeneTree" id="ENSGT00940000155114"/>
<dbReference type="HOGENOM" id="CLU_035750_5_1_1"/>
<dbReference type="InParanoid" id="Q60692"/>
<dbReference type="OMA" id="TFIYGYC"/>
<dbReference type="OrthoDB" id="7854943at2759"/>
<dbReference type="PhylomeDB" id="Q60692"/>
<dbReference type="TreeFam" id="TF106221"/>
<dbReference type="Reactome" id="R-MMU-1169091">
    <property type="pathway name" value="Activation of NF-kappaB in B cells"/>
</dbReference>
<dbReference type="Reactome" id="R-MMU-1234176">
    <property type="pathway name" value="Oxygen-dependent proline hydroxylation of Hypoxia-inducible Factor Alpha"/>
</dbReference>
<dbReference type="Reactome" id="R-MMU-1236978">
    <property type="pathway name" value="Cross-presentation of soluble exogenous antigens (endosomes)"/>
</dbReference>
<dbReference type="Reactome" id="R-MMU-174084">
    <property type="pathway name" value="Autodegradation of Cdh1 by Cdh1:APC/C"/>
</dbReference>
<dbReference type="Reactome" id="R-MMU-174154">
    <property type="pathway name" value="APC/C:Cdc20 mediated degradation of Securin"/>
</dbReference>
<dbReference type="Reactome" id="R-MMU-174178">
    <property type="pathway name" value="APC/C:Cdh1 mediated degradation of Cdc20 and other APC/C:Cdh1 targeted proteins in late mitosis/early G1"/>
</dbReference>
<dbReference type="Reactome" id="R-MMU-174184">
    <property type="pathway name" value="Cdc20:Phospho-APC/C mediated degradation of Cyclin A"/>
</dbReference>
<dbReference type="Reactome" id="R-MMU-187577">
    <property type="pathway name" value="SCF(Skp2)-mediated degradation of p27/p21"/>
</dbReference>
<dbReference type="Reactome" id="R-MMU-195253">
    <property type="pathway name" value="Degradation of beta-catenin by the destruction complex"/>
</dbReference>
<dbReference type="Reactome" id="R-MMU-202424">
    <property type="pathway name" value="Downstream TCR signaling"/>
</dbReference>
<dbReference type="Reactome" id="R-MMU-2467813">
    <property type="pathway name" value="Separation of Sister Chromatids"/>
</dbReference>
<dbReference type="Reactome" id="R-MMU-2871837">
    <property type="pathway name" value="FCERI mediated NF-kB activation"/>
</dbReference>
<dbReference type="Reactome" id="R-MMU-349425">
    <property type="pathway name" value="Autodegradation of the E3 ubiquitin ligase COP1"/>
</dbReference>
<dbReference type="Reactome" id="R-MMU-350562">
    <property type="pathway name" value="Regulation of ornithine decarboxylase (ODC)"/>
</dbReference>
<dbReference type="Reactome" id="R-MMU-382556">
    <property type="pathway name" value="ABC-family proteins mediated transport"/>
</dbReference>
<dbReference type="Reactome" id="R-MMU-450408">
    <property type="pathway name" value="AUF1 (hnRNP D0) binds and destabilizes mRNA"/>
</dbReference>
<dbReference type="Reactome" id="R-MMU-4608870">
    <property type="pathway name" value="Asymmetric localization of PCP proteins"/>
</dbReference>
<dbReference type="Reactome" id="R-MMU-4641257">
    <property type="pathway name" value="Degradation of AXIN"/>
</dbReference>
<dbReference type="Reactome" id="R-MMU-4641258">
    <property type="pathway name" value="Degradation of DVL"/>
</dbReference>
<dbReference type="Reactome" id="R-MMU-5358346">
    <property type="pathway name" value="Hedgehog ligand biogenesis"/>
</dbReference>
<dbReference type="Reactome" id="R-MMU-5607761">
    <property type="pathway name" value="Dectin-1 mediated noncanonical NF-kB signaling"/>
</dbReference>
<dbReference type="Reactome" id="R-MMU-5607764">
    <property type="pathway name" value="CLEC7A (Dectin-1) signaling"/>
</dbReference>
<dbReference type="Reactome" id="R-MMU-5610780">
    <property type="pathway name" value="Degradation of GLI1 by the proteasome"/>
</dbReference>
<dbReference type="Reactome" id="R-MMU-5610785">
    <property type="pathway name" value="GLI3 is processed to GLI3R by the proteasome"/>
</dbReference>
<dbReference type="Reactome" id="R-MMU-5632684">
    <property type="pathway name" value="Hedgehog 'on' state"/>
</dbReference>
<dbReference type="Reactome" id="R-MMU-5658442">
    <property type="pathway name" value="Regulation of RAS by GAPs"/>
</dbReference>
<dbReference type="Reactome" id="R-MMU-5668541">
    <property type="pathway name" value="TNFR2 non-canonical NF-kB pathway"/>
</dbReference>
<dbReference type="Reactome" id="R-MMU-5676590">
    <property type="pathway name" value="NIK--&gt;noncanonical NF-kB signaling"/>
</dbReference>
<dbReference type="Reactome" id="R-MMU-5687128">
    <property type="pathway name" value="MAPK6/MAPK4 signaling"/>
</dbReference>
<dbReference type="Reactome" id="R-MMU-5689603">
    <property type="pathway name" value="UCH proteinases"/>
</dbReference>
<dbReference type="Reactome" id="R-MMU-5689880">
    <property type="pathway name" value="Ub-specific processing proteases"/>
</dbReference>
<dbReference type="Reactome" id="R-MMU-68867">
    <property type="pathway name" value="Assembly of the pre-replicative complex"/>
</dbReference>
<dbReference type="Reactome" id="R-MMU-68949">
    <property type="pathway name" value="Orc1 removal from chromatin"/>
</dbReference>
<dbReference type="Reactome" id="R-MMU-69017">
    <property type="pathway name" value="CDK-mediated phosphorylation and removal of Cdc6"/>
</dbReference>
<dbReference type="Reactome" id="R-MMU-69481">
    <property type="pathway name" value="G2/M Checkpoints"/>
</dbReference>
<dbReference type="Reactome" id="R-MMU-69601">
    <property type="pathway name" value="Ubiquitin Mediated Degradation of Phosphorylated Cdc25A"/>
</dbReference>
<dbReference type="Reactome" id="R-MMU-75815">
    <property type="pathway name" value="Ubiquitin-dependent degradation of Cyclin D"/>
</dbReference>
<dbReference type="Reactome" id="R-MMU-8852276">
    <property type="pathway name" value="The role of GTSE1 in G2/M progression after G2 checkpoint"/>
</dbReference>
<dbReference type="Reactome" id="R-MMU-8854050">
    <property type="pathway name" value="FBXL7 down-regulates AURKA during mitotic entry and in early mitosis"/>
</dbReference>
<dbReference type="Reactome" id="R-MMU-8939236">
    <property type="pathway name" value="RUNX1 regulates transcription of genes involved in differentiation of HSCs"/>
</dbReference>
<dbReference type="Reactome" id="R-MMU-8939902">
    <property type="pathway name" value="Regulation of RUNX2 expression and activity"/>
</dbReference>
<dbReference type="Reactome" id="R-MMU-8941858">
    <property type="pathway name" value="Regulation of RUNX3 expression and activity"/>
</dbReference>
<dbReference type="Reactome" id="R-MMU-8948751">
    <property type="pathway name" value="Regulation of PTEN stability and activity"/>
</dbReference>
<dbReference type="Reactome" id="R-MMU-8951664">
    <property type="pathway name" value="Neddylation"/>
</dbReference>
<dbReference type="Reactome" id="R-MMU-9020702">
    <property type="pathway name" value="Interleukin-1 signaling"/>
</dbReference>
<dbReference type="Reactome" id="R-MMU-9755511">
    <property type="pathway name" value="KEAP1-NFE2L2 pathway"/>
</dbReference>
<dbReference type="Reactome" id="R-MMU-9762114">
    <property type="pathway name" value="GSK3B and BTRC:CUL1-mediated-degradation of NFE2L2"/>
</dbReference>
<dbReference type="Reactome" id="R-MMU-983168">
    <property type="pathway name" value="Antigen processing: Ubiquitination &amp; Proteasome degradation"/>
</dbReference>
<dbReference type="Reactome" id="R-MMU-9907900">
    <property type="pathway name" value="Proteasome assembly"/>
</dbReference>
<dbReference type="BioGRID-ORCS" id="19175">
    <property type="hits" value="31 hits in 76 CRISPR screens"/>
</dbReference>
<dbReference type="CD-CODE" id="CE726F99">
    <property type="entry name" value="Postsynaptic density"/>
</dbReference>
<dbReference type="ChiTaRS" id="Psmb6">
    <property type="organism name" value="mouse"/>
</dbReference>
<dbReference type="EvolutionaryTrace" id="Q60692"/>
<dbReference type="PRO" id="PR:Q60692"/>
<dbReference type="Proteomes" id="UP000000589">
    <property type="component" value="Chromosome 11"/>
</dbReference>
<dbReference type="RNAct" id="Q60692">
    <property type="molecule type" value="protein"/>
</dbReference>
<dbReference type="Bgee" id="ENSMUSG00000018286">
    <property type="expression patterns" value="Expressed in saccule of membranous labyrinth and 273 other cell types or tissues"/>
</dbReference>
<dbReference type="GO" id="GO:0005829">
    <property type="term" value="C:cytosol"/>
    <property type="evidence" value="ECO:0000304"/>
    <property type="project" value="Reactome"/>
</dbReference>
<dbReference type="GO" id="GO:0005739">
    <property type="term" value="C:mitochondrion"/>
    <property type="evidence" value="ECO:0007669"/>
    <property type="project" value="Ensembl"/>
</dbReference>
<dbReference type="GO" id="GO:0005654">
    <property type="term" value="C:nucleoplasm"/>
    <property type="evidence" value="ECO:0000304"/>
    <property type="project" value="Reactome"/>
</dbReference>
<dbReference type="GO" id="GO:0005839">
    <property type="term" value="C:proteasome core complex"/>
    <property type="evidence" value="ECO:0000314"/>
    <property type="project" value="UniProtKB"/>
</dbReference>
<dbReference type="GO" id="GO:0019774">
    <property type="term" value="C:proteasome core complex, beta-subunit complex"/>
    <property type="evidence" value="ECO:0000250"/>
    <property type="project" value="UniProtKB"/>
</dbReference>
<dbReference type="GO" id="GO:0004298">
    <property type="term" value="F:threonine-type endopeptidase activity"/>
    <property type="evidence" value="ECO:0007669"/>
    <property type="project" value="UniProtKB-KW"/>
</dbReference>
<dbReference type="GO" id="GO:0051603">
    <property type="term" value="P:proteolysis involved in protein catabolic process"/>
    <property type="evidence" value="ECO:0007669"/>
    <property type="project" value="InterPro"/>
</dbReference>
<dbReference type="CDD" id="cd03762">
    <property type="entry name" value="proteasome_beta_type_6"/>
    <property type="match status" value="1"/>
</dbReference>
<dbReference type="FunFam" id="3.60.20.10:FF:000010">
    <property type="entry name" value="Proteasome subunit beta type-1"/>
    <property type="match status" value="1"/>
</dbReference>
<dbReference type="Gene3D" id="3.60.20.10">
    <property type="entry name" value="Glutamine Phosphoribosylpyrophosphate, subunit 1, domain 1"/>
    <property type="match status" value="1"/>
</dbReference>
<dbReference type="InterPro" id="IPR029055">
    <property type="entry name" value="Ntn_hydrolases_N"/>
</dbReference>
<dbReference type="InterPro" id="IPR000243">
    <property type="entry name" value="Pept_T1A_subB"/>
</dbReference>
<dbReference type="InterPro" id="IPR016050">
    <property type="entry name" value="Proteasome_bsu_CS"/>
</dbReference>
<dbReference type="InterPro" id="IPR001353">
    <property type="entry name" value="Proteasome_sua/b"/>
</dbReference>
<dbReference type="InterPro" id="IPR023333">
    <property type="entry name" value="Proteasome_suB-type"/>
</dbReference>
<dbReference type="PANTHER" id="PTHR32194">
    <property type="entry name" value="METALLOPROTEASE TLDD"/>
    <property type="match status" value="1"/>
</dbReference>
<dbReference type="PANTHER" id="PTHR32194:SF14">
    <property type="entry name" value="PROTEASOME SUBUNIT BETA"/>
    <property type="match status" value="1"/>
</dbReference>
<dbReference type="Pfam" id="PF00227">
    <property type="entry name" value="Proteasome"/>
    <property type="match status" value="1"/>
</dbReference>
<dbReference type="PRINTS" id="PR00141">
    <property type="entry name" value="PROTEASOME"/>
</dbReference>
<dbReference type="SUPFAM" id="SSF56235">
    <property type="entry name" value="N-terminal nucleophile aminohydrolases (Ntn hydrolases)"/>
    <property type="match status" value="1"/>
</dbReference>
<dbReference type="PROSITE" id="PS00854">
    <property type="entry name" value="PROTEASOME_BETA_1"/>
    <property type="match status" value="1"/>
</dbReference>
<dbReference type="PROSITE" id="PS51476">
    <property type="entry name" value="PROTEASOME_BETA_2"/>
    <property type="match status" value="1"/>
</dbReference>
<keyword id="KW-0002">3D-structure</keyword>
<keyword id="KW-0007">Acetylation</keyword>
<keyword id="KW-0963">Cytoplasm</keyword>
<keyword id="KW-0903">Direct protein sequencing</keyword>
<keyword id="KW-0378">Hydrolase</keyword>
<keyword id="KW-0539">Nucleus</keyword>
<keyword id="KW-0597">Phosphoprotein</keyword>
<keyword id="KW-0645">Protease</keyword>
<keyword id="KW-0647">Proteasome</keyword>
<keyword id="KW-1185">Reference proteome</keyword>
<keyword id="KW-0888">Threonine protease</keyword>
<keyword id="KW-0865">Zymogen</keyword>
<feature type="initiator methionine" description="Removed" evidence="2">
    <location>
        <position position="1"/>
    </location>
</feature>
<feature type="propeptide" id="PRO_0000026615" description="Removed in mature form" evidence="1">
    <location>
        <begin position="2"/>
        <end position="33"/>
    </location>
</feature>
<feature type="chain" id="PRO_0000026616" description="Proteasome subunit beta type-6">
    <location>
        <begin position="34"/>
        <end position="238"/>
    </location>
</feature>
<feature type="active site" description="Nucleophile" evidence="2">
    <location>
        <position position="34"/>
    </location>
</feature>
<feature type="modified residue" description="N-acetylalanine" evidence="2">
    <location>
        <position position="2"/>
    </location>
</feature>
<feature type="modified residue" description="Phosphothreonine" evidence="2">
    <location>
        <position position="68"/>
    </location>
</feature>
<feature type="sequence variant" evidence="8">
    <original>A</original>
    <variation>T</variation>
    <location>
        <position position="38"/>
    </location>
</feature>
<feature type="sequence variant" evidence="8">
    <original>A</original>
    <variation>T</variation>
    <location>
        <position position="89"/>
    </location>
</feature>
<feature type="sequence conflict" description="In Ref. 1." evidence="9" ref="1">
    <original>A</original>
    <variation>T</variation>
    <location>
        <position position="2"/>
    </location>
</feature>
<feature type="sequence conflict" description="In Ref. 1." evidence="9" ref="1">
    <original>A</original>
    <variation>S</variation>
    <location>
        <position position="6"/>
    </location>
</feature>
<feature type="strand" evidence="10">
    <location>
        <begin position="36"/>
        <end position="40"/>
    </location>
</feature>
<feature type="strand" evidence="10">
    <location>
        <begin position="42"/>
        <end position="49"/>
    </location>
</feature>
<feature type="strand" evidence="10">
    <location>
        <begin position="53"/>
        <end position="55"/>
    </location>
</feature>
<feature type="strand" evidence="10">
    <location>
        <begin position="58"/>
        <end position="63"/>
    </location>
</feature>
<feature type="strand" evidence="10">
    <location>
        <begin position="67"/>
        <end position="69"/>
    </location>
</feature>
<feature type="strand" evidence="10">
    <location>
        <begin position="71"/>
        <end position="80"/>
    </location>
</feature>
<feature type="helix" evidence="10">
    <location>
        <begin position="82"/>
        <end position="103"/>
    </location>
</feature>
<feature type="helix" evidence="10">
    <location>
        <begin position="109"/>
        <end position="122"/>
    </location>
</feature>
<feature type="turn" evidence="10">
    <location>
        <begin position="123"/>
        <end position="126"/>
    </location>
</feature>
<feature type="strand" evidence="10">
    <location>
        <begin position="129"/>
        <end position="137"/>
    </location>
</feature>
<feature type="turn" evidence="10">
    <location>
        <begin position="138"/>
        <end position="140"/>
    </location>
</feature>
<feature type="strand" evidence="10">
    <location>
        <begin position="141"/>
        <end position="147"/>
    </location>
</feature>
<feature type="strand" evidence="10">
    <location>
        <begin position="157"/>
        <end position="162"/>
    </location>
</feature>
<feature type="helix" evidence="10">
    <location>
        <begin position="163"/>
        <end position="168"/>
    </location>
</feature>
<feature type="helix" evidence="10">
    <location>
        <begin position="169"/>
        <end position="175"/>
    </location>
</feature>
<feature type="helix" evidence="10">
    <location>
        <begin position="182"/>
        <end position="199"/>
    </location>
</feature>
<feature type="strand" evidence="11">
    <location>
        <begin position="200"/>
        <end position="202"/>
    </location>
</feature>
<feature type="strand" evidence="10">
    <location>
        <begin position="207"/>
        <end position="213"/>
    </location>
</feature>
<feature type="strand" evidence="10">
    <location>
        <begin position="216"/>
        <end position="222"/>
    </location>
</feature>
<feature type="helix" evidence="10">
    <location>
        <begin position="224"/>
        <end position="226"/>
    </location>
</feature>
<comment type="function">
    <text evidence="4 7">Component of the 20S core proteasome complex involved in the proteolytic degradation of most intracellular proteins. This complex plays numerous essential roles within the cell by associating with different regulatory particles. Associated with two 19S regulatory particles, forms the 26S proteasome and thus participates in the ATP-dependent degradation of ubiquitinated proteins. The 26S proteasome plays a key role in the maintenance of protein homeostasis by removing misfolded or damaged proteins that could impair cellular functions, and by removing proteins whose functions are no longer required. Associated with the PA200 or PA28, the 20S proteasome mediates ubiquitin-independent protein degradation. This type of proteolysis is required in several pathways including spermatogenesis (20S-PA200 complex) or generation of a subset of MHC class I-presented antigenic peptides (20S-PA28 complex). Within the 20S core complex, PSMB6 displays a peptidylglutamyl-hydrolyzing activity also termed postacidic or caspase-like activity, meaning that the peptides bond hydrolysis occurs directly after acidic residues.</text>
</comment>
<comment type="catalytic activity">
    <reaction evidence="2">
        <text>Cleavage of peptide bonds with very broad specificity.</text>
        <dbReference type="EC" id="3.4.25.1"/>
    </reaction>
</comment>
<comment type="subunit">
    <text evidence="5 7">The 26S proteasome consists of a 20S proteasome core and two 19S regulatory subunits. The 20S proteasome core is a barrel-shaped complex made of 28 subunits that are arranged in four stacked rings. The two outer rings are each formed by seven alpha subunits, and the two inner rings are formed by seven beta subunits. The proteolytic activity is exerted by three beta-subunits PSMB5, PSMB6 and PSMB7.</text>
</comment>
<comment type="subcellular location">
    <subcellularLocation>
        <location evidence="2">Cytoplasm</location>
    </subcellularLocation>
    <subcellularLocation>
        <location evidence="2">Nucleus</location>
    </subcellularLocation>
    <text evidence="2">Translocated from the cytoplasm into the nucleus following interaction with AKIRIN2, which bridges the proteasome with the nuclear import receptor IPO9.</text>
</comment>
<comment type="induction">
    <text evidence="6">Up-regulated by the antioxidant dithiolethione (D3T) in liver, lung and small intestine (at protein level).</text>
</comment>
<comment type="similarity">
    <text evidence="3">Belongs to the peptidase T1B family.</text>
</comment>
<comment type="sequence caution" evidence="9">
    <conflict type="erroneous initiation">
        <sequence resource="EMBL-CDS" id="AAA75375"/>
    </conflict>
</comment>
<comment type="sequence caution" evidence="9">
    <conflict type="erroneous initiation">
        <sequence resource="EMBL-CDS" id="AAA75376"/>
    </conflict>
</comment>
<comment type="sequence caution" evidence="9">
    <conflict type="erroneous initiation">
        <sequence resource="EMBL-CDS" id="AAH13897"/>
    </conflict>
</comment>
<comment type="sequence caution" evidence="9">
    <conflict type="frameshift">
        <sequence resource="EMBL-CDS" id="BAE20959"/>
    </conflict>
</comment>
<reference key="1">
    <citation type="journal article" date="1995" name="Immunogenetics">
        <title>Characterization and mapping of the gene encoding mouse proteasome subunit DELTA (Lmp19).</title>
        <authorList>
            <person name="Woodward E.C."/>
            <person name="Monaco J.J."/>
        </authorList>
    </citation>
    <scope>NUCLEOTIDE SEQUENCE [GENOMIC DNA / MRNA]</scope>
    <scope>VARIANTS THR-38 AND THR-89</scope>
    <source>
        <strain>DBA/2J</strain>
        <tissue>Liver</tissue>
    </source>
</reference>
<reference key="2">
    <citation type="journal article" date="2005" name="Science">
        <title>The transcriptional landscape of the mammalian genome.</title>
        <authorList>
            <person name="Carninci P."/>
            <person name="Kasukawa T."/>
            <person name="Katayama S."/>
            <person name="Gough J."/>
            <person name="Frith M.C."/>
            <person name="Maeda N."/>
            <person name="Oyama R."/>
            <person name="Ravasi T."/>
            <person name="Lenhard B."/>
            <person name="Wells C."/>
            <person name="Kodzius R."/>
            <person name="Shimokawa K."/>
            <person name="Bajic V.B."/>
            <person name="Brenner S.E."/>
            <person name="Batalov S."/>
            <person name="Forrest A.R."/>
            <person name="Zavolan M."/>
            <person name="Davis M.J."/>
            <person name="Wilming L.G."/>
            <person name="Aidinis V."/>
            <person name="Allen J.E."/>
            <person name="Ambesi-Impiombato A."/>
            <person name="Apweiler R."/>
            <person name="Aturaliya R.N."/>
            <person name="Bailey T.L."/>
            <person name="Bansal M."/>
            <person name="Baxter L."/>
            <person name="Beisel K.W."/>
            <person name="Bersano T."/>
            <person name="Bono H."/>
            <person name="Chalk A.M."/>
            <person name="Chiu K.P."/>
            <person name="Choudhary V."/>
            <person name="Christoffels A."/>
            <person name="Clutterbuck D.R."/>
            <person name="Crowe M.L."/>
            <person name="Dalla E."/>
            <person name="Dalrymple B.P."/>
            <person name="de Bono B."/>
            <person name="Della Gatta G."/>
            <person name="di Bernardo D."/>
            <person name="Down T."/>
            <person name="Engstrom P."/>
            <person name="Fagiolini M."/>
            <person name="Faulkner G."/>
            <person name="Fletcher C.F."/>
            <person name="Fukushima T."/>
            <person name="Furuno M."/>
            <person name="Futaki S."/>
            <person name="Gariboldi M."/>
            <person name="Georgii-Hemming P."/>
            <person name="Gingeras T.R."/>
            <person name="Gojobori T."/>
            <person name="Green R.E."/>
            <person name="Gustincich S."/>
            <person name="Harbers M."/>
            <person name="Hayashi Y."/>
            <person name="Hensch T.K."/>
            <person name="Hirokawa N."/>
            <person name="Hill D."/>
            <person name="Huminiecki L."/>
            <person name="Iacono M."/>
            <person name="Ikeo K."/>
            <person name="Iwama A."/>
            <person name="Ishikawa T."/>
            <person name="Jakt M."/>
            <person name="Kanapin A."/>
            <person name="Katoh M."/>
            <person name="Kawasawa Y."/>
            <person name="Kelso J."/>
            <person name="Kitamura H."/>
            <person name="Kitano H."/>
            <person name="Kollias G."/>
            <person name="Krishnan S.P."/>
            <person name="Kruger A."/>
            <person name="Kummerfeld S.K."/>
            <person name="Kurochkin I.V."/>
            <person name="Lareau L.F."/>
            <person name="Lazarevic D."/>
            <person name="Lipovich L."/>
            <person name="Liu J."/>
            <person name="Liuni S."/>
            <person name="McWilliam S."/>
            <person name="Madan Babu M."/>
            <person name="Madera M."/>
            <person name="Marchionni L."/>
            <person name="Matsuda H."/>
            <person name="Matsuzawa S."/>
            <person name="Miki H."/>
            <person name="Mignone F."/>
            <person name="Miyake S."/>
            <person name="Morris K."/>
            <person name="Mottagui-Tabar S."/>
            <person name="Mulder N."/>
            <person name="Nakano N."/>
            <person name="Nakauchi H."/>
            <person name="Ng P."/>
            <person name="Nilsson R."/>
            <person name="Nishiguchi S."/>
            <person name="Nishikawa S."/>
            <person name="Nori F."/>
            <person name="Ohara O."/>
            <person name="Okazaki Y."/>
            <person name="Orlando V."/>
            <person name="Pang K.C."/>
            <person name="Pavan W.J."/>
            <person name="Pavesi G."/>
            <person name="Pesole G."/>
            <person name="Petrovsky N."/>
            <person name="Piazza S."/>
            <person name="Reed J."/>
            <person name="Reid J.F."/>
            <person name="Ring B.Z."/>
            <person name="Ringwald M."/>
            <person name="Rost B."/>
            <person name="Ruan Y."/>
            <person name="Salzberg S.L."/>
            <person name="Sandelin A."/>
            <person name="Schneider C."/>
            <person name="Schoenbach C."/>
            <person name="Sekiguchi K."/>
            <person name="Semple C.A."/>
            <person name="Seno S."/>
            <person name="Sessa L."/>
            <person name="Sheng Y."/>
            <person name="Shibata Y."/>
            <person name="Shimada H."/>
            <person name="Shimada K."/>
            <person name="Silva D."/>
            <person name="Sinclair B."/>
            <person name="Sperling S."/>
            <person name="Stupka E."/>
            <person name="Sugiura K."/>
            <person name="Sultana R."/>
            <person name="Takenaka Y."/>
            <person name="Taki K."/>
            <person name="Tammoja K."/>
            <person name="Tan S.L."/>
            <person name="Tang S."/>
            <person name="Taylor M.S."/>
            <person name="Tegner J."/>
            <person name="Teichmann S.A."/>
            <person name="Ueda H.R."/>
            <person name="van Nimwegen E."/>
            <person name="Verardo R."/>
            <person name="Wei C.L."/>
            <person name="Yagi K."/>
            <person name="Yamanishi H."/>
            <person name="Zabarovsky E."/>
            <person name="Zhu S."/>
            <person name="Zimmer A."/>
            <person name="Hide W."/>
            <person name="Bult C."/>
            <person name="Grimmond S.M."/>
            <person name="Teasdale R.D."/>
            <person name="Liu E.T."/>
            <person name="Brusic V."/>
            <person name="Quackenbush J."/>
            <person name="Wahlestedt C."/>
            <person name="Mattick J.S."/>
            <person name="Hume D.A."/>
            <person name="Kai C."/>
            <person name="Sasaki D."/>
            <person name="Tomaru Y."/>
            <person name="Fukuda S."/>
            <person name="Kanamori-Katayama M."/>
            <person name="Suzuki M."/>
            <person name="Aoki J."/>
            <person name="Arakawa T."/>
            <person name="Iida J."/>
            <person name="Imamura K."/>
            <person name="Itoh M."/>
            <person name="Kato T."/>
            <person name="Kawaji H."/>
            <person name="Kawagashira N."/>
            <person name="Kawashima T."/>
            <person name="Kojima M."/>
            <person name="Kondo S."/>
            <person name="Konno H."/>
            <person name="Nakano K."/>
            <person name="Ninomiya N."/>
            <person name="Nishio T."/>
            <person name="Okada M."/>
            <person name="Plessy C."/>
            <person name="Shibata K."/>
            <person name="Shiraki T."/>
            <person name="Suzuki S."/>
            <person name="Tagami M."/>
            <person name="Waki K."/>
            <person name="Watahiki A."/>
            <person name="Okamura-Oho Y."/>
            <person name="Suzuki H."/>
            <person name="Kawai J."/>
            <person name="Hayashizaki Y."/>
        </authorList>
    </citation>
    <scope>NUCLEOTIDE SEQUENCE [LARGE SCALE MRNA]</scope>
    <source>
        <strain>C57BL/6J</strain>
        <tissue>Hippocampus</tissue>
        <tissue>Wolffian duct</tissue>
    </source>
</reference>
<reference key="3">
    <citation type="journal article" date="2009" name="PLoS Biol.">
        <title>Lineage-specific biology revealed by a finished genome assembly of the mouse.</title>
        <authorList>
            <person name="Church D.M."/>
            <person name="Goodstadt L."/>
            <person name="Hillier L.W."/>
            <person name="Zody M.C."/>
            <person name="Goldstein S."/>
            <person name="She X."/>
            <person name="Bult C.J."/>
            <person name="Agarwala R."/>
            <person name="Cherry J.L."/>
            <person name="DiCuccio M."/>
            <person name="Hlavina W."/>
            <person name="Kapustin Y."/>
            <person name="Meric P."/>
            <person name="Maglott D."/>
            <person name="Birtle Z."/>
            <person name="Marques A.C."/>
            <person name="Graves T."/>
            <person name="Zhou S."/>
            <person name="Teague B."/>
            <person name="Potamousis K."/>
            <person name="Churas C."/>
            <person name="Place M."/>
            <person name="Herschleb J."/>
            <person name="Runnheim R."/>
            <person name="Forrest D."/>
            <person name="Amos-Landgraf J."/>
            <person name="Schwartz D.C."/>
            <person name="Cheng Z."/>
            <person name="Lindblad-Toh K."/>
            <person name="Eichler E.E."/>
            <person name="Ponting C.P."/>
        </authorList>
    </citation>
    <scope>NUCLEOTIDE SEQUENCE [LARGE SCALE GENOMIC DNA]</scope>
    <source>
        <strain>C57BL/6J</strain>
    </source>
</reference>
<reference key="4">
    <citation type="journal article" date="2004" name="Genome Res.">
        <title>The status, quality, and expansion of the NIH full-length cDNA project: the Mammalian Gene Collection (MGC).</title>
        <authorList>
            <consortium name="The MGC Project Team"/>
        </authorList>
    </citation>
    <scope>NUCLEOTIDE SEQUENCE [LARGE SCALE MRNA] OF 7-238</scope>
    <source>
        <strain>FVB/N</strain>
        <tissue>Mammary tumor</tissue>
    </source>
</reference>
<reference key="5">
    <citation type="submission" date="2007-04" db="UniProtKB">
        <authorList>
            <person name="Lubec G."/>
            <person name="Kang S.U."/>
        </authorList>
    </citation>
    <scope>PROTEIN SEQUENCE OF 209-229</scope>
    <scope>IDENTIFICATION BY MASS SPECTROMETRY</scope>
    <source>
        <strain>C57BL/6J</strain>
        <tissue>Brain</tissue>
    </source>
</reference>
<reference key="6">
    <citation type="journal article" date="2006" name="Mol. Cell. Biol.">
        <title>Proteasome activator PA200 is required for normal spermatogenesis.</title>
        <authorList>
            <person name="Khor B."/>
            <person name="Bredemeyer A.L."/>
            <person name="Huang C.-Y."/>
            <person name="Turnbull I.R."/>
            <person name="Evans R."/>
            <person name="Maggi L.B. Jr."/>
            <person name="White J.M."/>
            <person name="Walker L.M."/>
            <person name="Carnes K."/>
            <person name="Hess R.A."/>
            <person name="Sleckman B.P."/>
        </authorList>
    </citation>
    <scope>FUNCTION</scope>
</reference>
<reference key="7">
    <citation type="journal article" date="2007" name="Life Sci.">
        <title>Tissue specific increase of the catalytic subunits of the 26S proteasome by indirect antioxidant dithiolethione in mice: enhanced activity for degradation of abnormal protein.</title>
        <authorList>
            <person name="Kwak M.K."/>
            <person name="Huang B."/>
            <person name="Chang H."/>
            <person name="Kim J.A."/>
            <person name="Kensler T.W."/>
        </authorList>
    </citation>
    <scope>INDUCTION BY DITHIOLETHIONE</scope>
</reference>
<reference key="8">
    <citation type="journal article" date="2006" name="Circ. Res.">
        <title>Mapping the murine cardiac 26S proteasome complexes.</title>
        <authorList>
            <person name="Gomes A.V."/>
            <person name="Zong C."/>
            <person name="Edmondson R.D."/>
            <person name="Li X."/>
            <person name="Stefani E."/>
            <person name="Zhang J."/>
            <person name="Jones R.C."/>
            <person name="Thyparambil S."/>
            <person name="Wang G.W."/>
            <person name="Qiao X."/>
            <person name="Bardag-Gorce F."/>
            <person name="Ping P."/>
        </authorList>
    </citation>
    <scope>IDENTIFICATION IN THE 20S PROTEASOME CORE COMPLEX</scope>
</reference>
<reference key="9">
    <citation type="journal article" date="2010" name="Cell">
        <title>A tissue-specific atlas of mouse protein phosphorylation and expression.</title>
        <authorList>
            <person name="Huttlin E.L."/>
            <person name="Jedrychowski M.P."/>
            <person name="Elias J.E."/>
            <person name="Goswami T."/>
            <person name="Rad R."/>
            <person name="Beausoleil S.A."/>
            <person name="Villen J."/>
            <person name="Haas W."/>
            <person name="Sowa M.E."/>
            <person name="Gygi S.P."/>
        </authorList>
    </citation>
    <scope>IDENTIFICATION BY MASS SPECTROMETRY [LARGE SCALE ANALYSIS]</scope>
    <source>
        <tissue>Brain</tissue>
        <tissue>Brown adipose tissue</tissue>
        <tissue>Heart</tissue>
        <tissue>Kidney</tissue>
        <tissue>Liver</tissue>
        <tissue>Lung</tissue>
        <tissue>Pancreas</tissue>
        <tissue>Spleen</tissue>
        <tissue>Testis</tissue>
    </source>
</reference>
<reference key="10">
    <citation type="journal article" date="2012" name="Cell">
        <title>Immuno- and constitutive proteasome crystal structures reveal differences in substrate and inhibitor specificity.</title>
        <authorList>
            <person name="Huber E.M."/>
            <person name="Basler M."/>
            <person name="Schwab R."/>
            <person name="Heinemeyer W."/>
            <person name="Kirk C.J."/>
            <person name="Groettrup M."/>
            <person name="Groll M."/>
        </authorList>
    </citation>
    <scope>X-RAY CRYSTALLOGRAPHY (2.90 ANGSTROMS) OF 20S IMMUNOPROTEASOME</scope>
    <scope>SUBUNIT</scope>
    <scope>FUNCTION</scope>
</reference>
<gene>
    <name type="primary">Psmb6</name>
    <name type="synonym">Lmp19</name>
</gene>
<organism>
    <name type="scientific">Mus musculus</name>
    <name type="common">Mouse</name>
    <dbReference type="NCBI Taxonomy" id="10090"/>
    <lineage>
        <taxon>Eukaryota</taxon>
        <taxon>Metazoa</taxon>
        <taxon>Chordata</taxon>
        <taxon>Craniata</taxon>
        <taxon>Vertebrata</taxon>
        <taxon>Euteleostomi</taxon>
        <taxon>Mammalia</taxon>
        <taxon>Eutheria</taxon>
        <taxon>Euarchontoglires</taxon>
        <taxon>Glires</taxon>
        <taxon>Rodentia</taxon>
        <taxon>Myomorpha</taxon>
        <taxon>Muroidea</taxon>
        <taxon>Muridae</taxon>
        <taxon>Murinae</taxon>
        <taxon>Mus</taxon>
        <taxon>Mus</taxon>
    </lineage>
</organism>
<protein>
    <recommendedName>
        <fullName>Proteasome subunit beta type-6</fullName>
        <ecNumber evidence="2">3.4.25.1</ecNumber>
    </recommendedName>
    <alternativeName>
        <fullName>Low molecular mass protein 19</fullName>
    </alternativeName>
    <alternativeName>
        <fullName>Macropain delta chain</fullName>
    </alternativeName>
    <alternativeName>
        <fullName>Multicatalytic endopeptidase complex delta chain</fullName>
    </alternativeName>
    <alternativeName>
        <fullName>Proteasome delta chain</fullName>
    </alternativeName>
    <alternativeName>
        <fullName>Proteasome subunit Y</fullName>
    </alternativeName>
    <alternativeName>
        <fullName>Proteasome subunit beta-1</fullName>
        <shortName>beta-1</shortName>
    </alternativeName>
</protein>
<accession>Q60692</accession>
<accession>Q3V240</accession>
<accession>Q60693</accession>
<accession>Q8BJX9</accession>
<accession>Q91VH5</accession>